<reference key="1">
    <citation type="submission" date="2006-12" db="EMBL/GenBank/DDBJ databases">
        <title>Complete sequence of Acidovorax avenae subsp. citrulli AAC00-1.</title>
        <authorList>
            <person name="Copeland A."/>
            <person name="Lucas S."/>
            <person name="Lapidus A."/>
            <person name="Barry K."/>
            <person name="Detter J.C."/>
            <person name="Glavina del Rio T."/>
            <person name="Dalin E."/>
            <person name="Tice H."/>
            <person name="Pitluck S."/>
            <person name="Kiss H."/>
            <person name="Brettin T."/>
            <person name="Bruce D."/>
            <person name="Han C."/>
            <person name="Tapia R."/>
            <person name="Gilna P."/>
            <person name="Schmutz J."/>
            <person name="Larimer F."/>
            <person name="Land M."/>
            <person name="Hauser L."/>
            <person name="Kyrpides N."/>
            <person name="Kim E."/>
            <person name="Stahl D."/>
            <person name="Richardson P."/>
        </authorList>
    </citation>
    <scope>NUCLEOTIDE SEQUENCE [LARGE SCALE GENOMIC DNA]</scope>
    <source>
        <strain>AAC00-1</strain>
    </source>
</reference>
<feature type="chain" id="PRO_0000302621" description="ATP synthase subunit alpha">
    <location>
        <begin position="1"/>
        <end position="519"/>
    </location>
</feature>
<feature type="binding site" evidence="1">
    <location>
        <begin position="174"/>
        <end position="181"/>
    </location>
    <ligand>
        <name>ATP</name>
        <dbReference type="ChEBI" id="CHEBI:30616"/>
    </ligand>
</feature>
<feature type="site" description="Required for activity" evidence="1">
    <location>
        <position position="378"/>
    </location>
</feature>
<proteinExistence type="inferred from homology"/>
<accession>A1TJ39</accession>
<keyword id="KW-0066">ATP synthesis</keyword>
<keyword id="KW-0067">ATP-binding</keyword>
<keyword id="KW-0997">Cell inner membrane</keyword>
<keyword id="KW-1003">Cell membrane</keyword>
<keyword id="KW-0139">CF(1)</keyword>
<keyword id="KW-0375">Hydrogen ion transport</keyword>
<keyword id="KW-0406">Ion transport</keyword>
<keyword id="KW-0472">Membrane</keyword>
<keyword id="KW-0547">Nucleotide-binding</keyword>
<keyword id="KW-1278">Translocase</keyword>
<keyword id="KW-0813">Transport</keyword>
<evidence type="ECO:0000255" key="1">
    <source>
        <dbReference type="HAMAP-Rule" id="MF_01346"/>
    </source>
</evidence>
<name>ATPA_PARC0</name>
<sequence length="519" mass="55601">MQLNPAEISELIKSRIEGLAASSDIRNQGTVVSVTDGIVRIHGLSEVMQGEMLEFPATKDGQPSYGLALNLERDSVGAVILGEYEHISEGDTVKCTGRILEVPVGPELVGRVVNALGQPIDGKGPINAKLTDVIEKVAPGVIARQSVDQPLQTGIKSIDAMVPVGRGQRELIIGDRQTGKTAVAIDAIIAQKGQGVTCIYVAIGQKASSIKNVVRALEQAGAMEYTIVVAASASESAAMQYVSAYSGCTMGEYFRDRGEDALIVYDDLSKQAVAYRQVSLLLRRPPGREAYPGDVFYLHSRLLERAARVNADYVEAFTKGEVKGKTGSLTALPIIETQAGDVSAFVPTNVISITDGQIFLETSLFNAGIRPAINAGISVSRVGGAAQTKLVKGLSGGIRTDLAQYRELAAFAQFASDLDEATRKQLDRGARVTELLKQPQYTPLPISLMGATLFAVNKGFMDDVDVKKVLAFESGLHQFLKTSHGALLERLEKNRAFDKEGKDEAELTQAITAFKKSFA</sequence>
<organism>
    <name type="scientific">Paracidovorax citrulli (strain AAC00-1)</name>
    <name type="common">Acidovorax citrulli</name>
    <dbReference type="NCBI Taxonomy" id="397945"/>
    <lineage>
        <taxon>Bacteria</taxon>
        <taxon>Pseudomonadati</taxon>
        <taxon>Pseudomonadota</taxon>
        <taxon>Betaproteobacteria</taxon>
        <taxon>Burkholderiales</taxon>
        <taxon>Comamonadaceae</taxon>
        <taxon>Paracidovorax</taxon>
    </lineage>
</organism>
<protein>
    <recommendedName>
        <fullName evidence="1">ATP synthase subunit alpha</fullName>
        <ecNumber evidence="1">7.1.2.2</ecNumber>
    </recommendedName>
    <alternativeName>
        <fullName evidence="1">ATP synthase F1 sector subunit alpha</fullName>
    </alternativeName>
    <alternativeName>
        <fullName evidence="1">F-ATPase subunit alpha</fullName>
    </alternativeName>
</protein>
<gene>
    <name evidence="1" type="primary">atpA</name>
    <name type="ordered locus">Aave_0370</name>
</gene>
<comment type="function">
    <text evidence="1">Produces ATP from ADP in the presence of a proton gradient across the membrane. The alpha chain is a regulatory subunit.</text>
</comment>
<comment type="catalytic activity">
    <reaction evidence="1">
        <text>ATP + H2O + 4 H(+)(in) = ADP + phosphate + 5 H(+)(out)</text>
        <dbReference type="Rhea" id="RHEA:57720"/>
        <dbReference type="ChEBI" id="CHEBI:15377"/>
        <dbReference type="ChEBI" id="CHEBI:15378"/>
        <dbReference type="ChEBI" id="CHEBI:30616"/>
        <dbReference type="ChEBI" id="CHEBI:43474"/>
        <dbReference type="ChEBI" id="CHEBI:456216"/>
        <dbReference type="EC" id="7.1.2.2"/>
    </reaction>
</comment>
<comment type="subunit">
    <text evidence="1">F-type ATPases have 2 components, CF(1) - the catalytic core - and CF(0) - the membrane proton channel. CF(1) has five subunits: alpha(3), beta(3), gamma(1), delta(1), epsilon(1). CF(0) has three main subunits: a(1), b(2) and c(9-12). The alpha and beta chains form an alternating ring which encloses part of the gamma chain. CF(1) is attached to CF(0) by a central stalk formed by the gamma and epsilon chains, while a peripheral stalk is formed by the delta and b chains.</text>
</comment>
<comment type="subcellular location">
    <subcellularLocation>
        <location evidence="1">Cell inner membrane</location>
        <topology evidence="1">Peripheral membrane protein</topology>
    </subcellularLocation>
</comment>
<comment type="similarity">
    <text evidence="1">Belongs to the ATPase alpha/beta chains family.</text>
</comment>
<dbReference type="EC" id="7.1.2.2" evidence="1"/>
<dbReference type="EMBL" id="CP000512">
    <property type="protein sequence ID" value="ABM30977.1"/>
    <property type="molecule type" value="Genomic_DNA"/>
</dbReference>
<dbReference type="RefSeq" id="WP_011793554.1">
    <property type="nucleotide sequence ID" value="NC_008752.1"/>
</dbReference>
<dbReference type="SMR" id="A1TJ39"/>
<dbReference type="STRING" id="397945.Aave_0370"/>
<dbReference type="GeneID" id="79790178"/>
<dbReference type="KEGG" id="aav:Aave_0370"/>
<dbReference type="eggNOG" id="COG0056">
    <property type="taxonomic scope" value="Bacteria"/>
</dbReference>
<dbReference type="HOGENOM" id="CLU_010091_2_1_4"/>
<dbReference type="OrthoDB" id="9803053at2"/>
<dbReference type="Proteomes" id="UP000002596">
    <property type="component" value="Chromosome"/>
</dbReference>
<dbReference type="GO" id="GO:0005886">
    <property type="term" value="C:plasma membrane"/>
    <property type="evidence" value="ECO:0007669"/>
    <property type="project" value="UniProtKB-SubCell"/>
</dbReference>
<dbReference type="GO" id="GO:0045259">
    <property type="term" value="C:proton-transporting ATP synthase complex"/>
    <property type="evidence" value="ECO:0007669"/>
    <property type="project" value="UniProtKB-KW"/>
</dbReference>
<dbReference type="GO" id="GO:0043531">
    <property type="term" value="F:ADP binding"/>
    <property type="evidence" value="ECO:0007669"/>
    <property type="project" value="TreeGrafter"/>
</dbReference>
<dbReference type="GO" id="GO:0005524">
    <property type="term" value="F:ATP binding"/>
    <property type="evidence" value="ECO:0007669"/>
    <property type="project" value="UniProtKB-UniRule"/>
</dbReference>
<dbReference type="GO" id="GO:0046933">
    <property type="term" value="F:proton-transporting ATP synthase activity, rotational mechanism"/>
    <property type="evidence" value="ECO:0007669"/>
    <property type="project" value="UniProtKB-UniRule"/>
</dbReference>
<dbReference type="CDD" id="cd18113">
    <property type="entry name" value="ATP-synt_F1_alpha_C"/>
    <property type="match status" value="1"/>
</dbReference>
<dbReference type="CDD" id="cd18116">
    <property type="entry name" value="ATP-synt_F1_alpha_N"/>
    <property type="match status" value="1"/>
</dbReference>
<dbReference type="CDD" id="cd01132">
    <property type="entry name" value="F1-ATPase_alpha_CD"/>
    <property type="match status" value="1"/>
</dbReference>
<dbReference type="FunFam" id="1.20.150.20:FF:000001">
    <property type="entry name" value="ATP synthase subunit alpha"/>
    <property type="match status" value="1"/>
</dbReference>
<dbReference type="FunFam" id="2.40.30.20:FF:000001">
    <property type="entry name" value="ATP synthase subunit alpha"/>
    <property type="match status" value="1"/>
</dbReference>
<dbReference type="FunFam" id="3.40.50.300:FF:000002">
    <property type="entry name" value="ATP synthase subunit alpha"/>
    <property type="match status" value="1"/>
</dbReference>
<dbReference type="Gene3D" id="2.40.30.20">
    <property type="match status" value="1"/>
</dbReference>
<dbReference type="Gene3D" id="1.20.150.20">
    <property type="entry name" value="ATP synthase alpha/beta chain, C-terminal domain"/>
    <property type="match status" value="1"/>
</dbReference>
<dbReference type="Gene3D" id="3.40.50.300">
    <property type="entry name" value="P-loop containing nucleotide triphosphate hydrolases"/>
    <property type="match status" value="1"/>
</dbReference>
<dbReference type="HAMAP" id="MF_01346">
    <property type="entry name" value="ATP_synth_alpha_bact"/>
    <property type="match status" value="1"/>
</dbReference>
<dbReference type="InterPro" id="IPR023366">
    <property type="entry name" value="ATP_synth_asu-like_sf"/>
</dbReference>
<dbReference type="InterPro" id="IPR000793">
    <property type="entry name" value="ATP_synth_asu_C"/>
</dbReference>
<dbReference type="InterPro" id="IPR038376">
    <property type="entry name" value="ATP_synth_asu_C_sf"/>
</dbReference>
<dbReference type="InterPro" id="IPR033732">
    <property type="entry name" value="ATP_synth_F1_a_nt-bd_dom"/>
</dbReference>
<dbReference type="InterPro" id="IPR005294">
    <property type="entry name" value="ATP_synth_F1_asu"/>
</dbReference>
<dbReference type="InterPro" id="IPR020003">
    <property type="entry name" value="ATPase_a/bsu_AS"/>
</dbReference>
<dbReference type="InterPro" id="IPR004100">
    <property type="entry name" value="ATPase_F1/V1/A1_a/bsu_N"/>
</dbReference>
<dbReference type="InterPro" id="IPR036121">
    <property type="entry name" value="ATPase_F1/V1/A1_a/bsu_N_sf"/>
</dbReference>
<dbReference type="InterPro" id="IPR000194">
    <property type="entry name" value="ATPase_F1/V1/A1_a/bsu_nucl-bd"/>
</dbReference>
<dbReference type="InterPro" id="IPR027417">
    <property type="entry name" value="P-loop_NTPase"/>
</dbReference>
<dbReference type="NCBIfam" id="TIGR00962">
    <property type="entry name" value="atpA"/>
    <property type="match status" value="1"/>
</dbReference>
<dbReference type="NCBIfam" id="NF009884">
    <property type="entry name" value="PRK13343.1"/>
    <property type="match status" value="1"/>
</dbReference>
<dbReference type="PANTHER" id="PTHR48082">
    <property type="entry name" value="ATP SYNTHASE SUBUNIT ALPHA, MITOCHONDRIAL"/>
    <property type="match status" value="1"/>
</dbReference>
<dbReference type="PANTHER" id="PTHR48082:SF2">
    <property type="entry name" value="ATP SYNTHASE SUBUNIT ALPHA, MITOCHONDRIAL"/>
    <property type="match status" value="1"/>
</dbReference>
<dbReference type="Pfam" id="PF00006">
    <property type="entry name" value="ATP-synt_ab"/>
    <property type="match status" value="1"/>
</dbReference>
<dbReference type="Pfam" id="PF00306">
    <property type="entry name" value="ATP-synt_ab_C"/>
    <property type="match status" value="1"/>
</dbReference>
<dbReference type="Pfam" id="PF02874">
    <property type="entry name" value="ATP-synt_ab_N"/>
    <property type="match status" value="1"/>
</dbReference>
<dbReference type="SUPFAM" id="SSF47917">
    <property type="entry name" value="C-terminal domain of alpha and beta subunits of F1 ATP synthase"/>
    <property type="match status" value="1"/>
</dbReference>
<dbReference type="SUPFAM" id="SSF50615">
    <property type="entry name" value="N-terminal domain of alpha and beta subunits of F1 ATP synthase"/>
    <property type="match status" value="1"/>
</dbReference>
<dbReference type="SUPFAM" id="SSF52540">
    <property type="entry name" value="P-loop containing nucleoside triphosphate hydrolases"/>
    <property type="match status" value="1"/>
</dbReference>
<dbReference type="PROSITE" id="PS00152">
    <property type="entry name" value="ATPASE_ALPHA_BETA"/>
    <property type="match status" value="1"/>
</dbReference>